<sequence>MSAWMSAGFS</sequence>
<accession>C0HLB1</accession>
<proteinExistence type="evidence at protein level"/>
<keyword id="KW-0002">3D-structure</keyword>
<keyword id="KW-0066">ATP synthesis</keyword>
<keyword id="KW-0139">CF(1)</keyword>
<keyword id="KW-0375">Hydrogen ion transport</keyword>
<keyword id="KW-0406">Ion transport</keyword>
<keyword id="KW-0472">Membrane</keyword>
<keyword id="KW-0496">Mitochondrion</keyword>
<keyword id="KW-0999">Mitochondrion inner membrane</keyword>
<keyword id="KW-1185">Reference proteome</keyword>
<keyword id="KW-0813">Transport</keyword>
<organism>
    <name type="scientific">Yarrowia lipolytica (strain CLIB 122 / E 150)</name>
    <name type="common">Yeast</name>
    <name type="synonym">Candida lipolytica</name>
    <dbReference type="NCBI Taxonomy" id="284591"/>
    <lineage>
        <taxon>Eukaryota</taxon>
        <taxon>Fungi</taxon>
        <taxon>Dikarya</taxon>
        <taxon>Ascomycota</taxon>
        <taxon>Saccharomycotina</taxon>
        <taxon>Dipodascomycetes</taxon>
        <taxon>Dipodascales</taxon>
        <taxon>Dipodascales incertae sedis</taxon>
        <taxon>Yarrowia</taxon>
    </lineage>
</organism>
<name>ATP5E_YARLI</name>
<evidence type="ECO:0000250" key="1">
    <source>
        <dbReference type="UniProtKB" id="P21306"/>
    </source>
</evidence>
<evidence type="ECO:0000269" key="2">
    <source>
    </source>
</evidence>
<evidence type="ECO:0000269" key="3">
    <source>
    </source>
</evidence>
<evidence type="ECO:0000303" key="4">
    <source>
    </source>
</evidence>
<evidence type="ECO:0000305" key="5"/>
<evidence type="ECO:0000305" key="6">
    <source>
    </source>
</evidence>
<dbReference type="EMBL" id="CR382131">
    <property type="status" value="NOT_ANNOTATED_CDS"/>
    <property type="molecule type" value="Genomic_DNA"/>
</dbReference>
<dbReference type="PDB" id="5FL7">
    <property type="method" value="X-ray"/>
    <property type="resolution" value="3.50 A"/>
    <property type="chains" value="H=1-10"/>
</dbReference>
<dbReference type="PDBsum" id="5FL7"/>
<dbReference type="STRING" id="284591.C0HLB1"/>
<dbReference type="InParanoid" id="C0HLB1"/>
<dbReference type="Proteomes" id="UP000001300">
    <property type="component" value="Chromosome E"/>
</dbReference>
<dbReference type="GO" id="GO:0005743">
    <property type="term" value="C:mitochondrial inner membrane"/>
    <property type="evidence" value="ECO:0007669"/>
    <property type="project" value="UniProtKB-SubCell"/>
</dbReference>
<dbReference type="GO" id="GO:0045259">
    <property type="term" value="C:proton-transporting ATP synthase complex"/>
    <property type="evidence" value="ECO:0007669"/>
    <property type="project" value="UniProtKB-KW"/>
</dbReference>
<dbReference type="GO" id="GO:0006754">
    <property type="term" value="P:ATP biosynthetic process"/>
    <property type="evidence" value="ECO:0007669"/>
    <property type="project" value="UniProtKB-KW"/>
</dbReference>
<dbReference type="GO" id="GO:1902600">
    <property type="term" value="P:proton transmembrane transport"/>
    <property type="evidence" value="ECO:0007669"/>
    <property type="project" value="UniProtKB-KW"/>
</dbReference>
<gene>
    <name evidence="1" type="primary">ATP15</name>
</gene>
<comment type="function">
    <text evidence="2 3">Mitochondrial membrane ATP synthase (F(1)F(0) ATP synthase or Complex V) produces ATP from ADP in the presence of a proton gradient across the membrane which is generated by electron transport complexes of the respiratory chain (PubMed:25759169). F-type ATP synthases consist of two structural domains, F(1) - containing the extramembraneous catalytic core, and F(0) - containing the membrane proton channel, linked together by a central stalk and a peripheral stalk (PubMed:27373333). During catalysis, ATP synthesis in the catalytic domain of F(1) is coupled via a rotary mechanism of the central stalk subunits to proton translocation (PubMed:27373333). Part of the complex F(1) domain and the central stalk which is part of the complex rotary element (PubMed:27373333). Rotation of the central stalk against the surrounding alpha/ATP1(3)beta/ATP2(3) subunits leads to hydrolysis of ATP in three separate catalytic sites on the beta/ATP2 subunits (PubMed:27373333).</text>
</comment>
<comment type="subunit">
    <text evidence="2 3">F-type ATP synthases have 2 components, the catalytic core F(1) and the membrane-embedded component F(0), linked together by a central stalk and a peripheral stalk (PubMed:27373333). The central stalk, also called rotor shaft, is often seen as part of F(1) (PubMed:27373333). The peripheral stalk is seen as part of F(0) (PubMed:27373333). F(0) contains the membrane channel next to the rotor (PubMed:27373333). F-type ATP synthases form dimers but each monomer functions independently in ATP generation (PubMed:27373333). The dimer consists of 17 different polypeptides: ATP1 (subunit alpha, 3 molecules per monomer, part of F(1)), ATP2 (subunit beta, 3 copies per monomer, part of F(1)), ATP3 (subunit gamma, part of the central stalk), ATP4 (subunit b, part of the peripheral stalk), ATP5/OSCP (subunit 5/OSCP, part of the peripheral stalk), ATP6 (subunit a, part of the peripheral stalk), ATP7 (subunit d, part of the peripheral stalk), ATP8 (subunit 8, part of the peripheral stalk), OLI1 (subunit c, part of the rotor, 10 molecules per monomer), ATP14 (subunit h, part of the peripheral stalk), ATP15 (subunit epsilon, part of the central stalk), ATP16 (subunit delta, part of the central stalk), ATP17 (subunit f, part of the peripheral stalk), ATP18 (subunit i/j, part of the peripheral stalk), ATP19 (subunit k, dimer-specific, at interface between monomers), ATP20 (subunit g, at interface between monomers), TIM11 (subunit e, at interface between monomers) (PubMed:25759169, PubMed:27373333).</text>
</comment>
<comment type="subcellular location">
    <subcellularLocation>
        <location evidence="6">Mitochondrion inner membrane</location>
        <topology evidence="6">Peripheral membrane protein</topology>
        <orientation evidence="6">Matrix side</orientation>
    </subcellularLocation>
    <text evidence="6">The F-type ATP synthase complex is anchored in the mitochondrial inner membrane via the F(0) domain with the F(1) domain and the peripheral stalk extending into the mitochondrial matrix.</text>
</comment>
<comment type="mass spectrometry"/>
<comment type="similarity">
    <text evidence="5">Belongs to the eukaryotic ATPase epsilon family.</text>
</comment>
<protein>
    <recommendedName>
        <fullName evidence="1">ATP synthase subunit epsilon, mitochondrial</fullName>
        <shortName evidence="1">ATPase subunit epsilon</shortName>
    </recommendedName>
</protein>
<reference evidence="5" key="1">
    <citation type="journal article" date="2015" name="Biochem. J.">
        <title>The purification and characterization of ATP synthase complexes from the mitochondria of four fungal species.</title>
        <authorList>
            <person name="Liu S."/>
            <person name="Charlesworth T.J."/>
            <person name="Bason J.V."/>
            <person name="Montgomery M.G."/>
            <person name="Harbour M.E."/>
            <person name="Fearnley I.M."/>
            <person name="Walker J.E."/>
        </authorList>
    </citation>
    <scope>NUCLEOTIDE SEQUENCE [GENOMIC DNA]</scope>
    <scope>IDENTIFICATION IN ATP SYNTHASE COMPLEX</scope>
    <scope>FUNCTION OF ATP SYNTHASE COMPLEX</scope>
    <scope>SUBUNIT</scope>
    <scope>SUBCELLULAR LOCATION</scope>
    <scope>MASS SPECTROMETRY</scope>
    <scope>IDENTIFICATION BY MASS SPECTROMETRY</scope>
    <source>
        <strain evidence="4">CLIB 122 / E 150</strain>
    </source>
</reference>
<reference key="2">
    <citation type="journal article" date="2004" name="Nature">
        <title>Genome evolution in yeasts.</title>
        <authorList>
            <person name="Dujon B."/>
            <person name="Sherman D."/>
            <person name="Fischer G."/>
            <person name="Durrens P."/>
            <person name="Casaregola S."/>
            <person name="Lafontaine I."/>
            <person name="de Montigny J."/>
            <person name="Marck C."/>
            <person name="Neuveglise C."/>
            <person name="Talla E."/>
            <person name="Goffard N."/>
            <person name="Frangeul L."/>
            <person name="Aigle M."/>
            <person name="Anthouard V."/>
            <person name="Babour A."/>
            <person name="Barbe V."/>
            <person name="Barnay S."/>
            <person name="Blanchin S."/>
            <person name="Beckerich J.-M."/>
            <person name="Beyne E."/>
            <person name="Bleykasten C."/>
            <person name="Boisrame A."/>
            <person name="Boyer J."/>
            <person name="Cattolico L."/>
            <person name="Confanioleri F."/>
            <person name="de Daruvar A."/>
            <person name="Despons L."/>
            <person name="Fabre E."/>
            <person name="Fairhead C."/>
            <person name="Ferry-Dumazet H."/>
            <person name="Groppi A."/>
            <person name="Hantraye F."/>
            <person name="Hennequin C."/>
            <person name="Jauniaux N."/>
            <person name="Joyet P."/>
            <person name="Kachouri R."/>
            <person name="Kerrest A."/>
            <person name="Koszul R."/>
            <person name="Lemaire M."/>
            <person name="Lesur I."/>
            <person name="Ma L."/>
            <person name="Muller H."/>
            <person name="Nicaud J.-M."/>
            <person name="Nikolski M."/>
            <person name="Oztas S."/>
            <person name="Ozier-Kalogeropoulos O."/>
            <person name="Pellenz S."/>
            <person name="Potier S."/>
            <person name="Richard G.-F."/>
            <person name="Straub M.-L."/>
            <person name="Suleau A."/>
            <person name="Swennen D."/>
            <person name="Tekaia F."/>
            <person name="Wesolowski-Louvel M."/>
            <person name="Westhof E."/>
            <person name="Wirth B."/>
            <person name="Zeniou-Meyer M."/>
            <person name="Zivanovic Y."/>
            <person name="Bolotin-Fukuhara M."/>
            <person name="Thierry A."/>
            <person name="Bouchier C."/>
            <person name="Caudron B."/>
            <person name="Scarpelli C."/>
            <person name="Gaillardin C."/>
            <person name="Weissenbach J."/>
            <person name="Wincker P."/>
            <person name="Souciet J.-L."/>
        </authorList>
    </citation>
    <scope>NUCLEOTIDE SEQUENCE [LARGE SCALE GENOMIC DNA]</scope>
    <source>
        <strain>CLIB 122 / E 150</strain>
    </source>
</reference>
<reference key="3">
    <citation type="journal article" date="2016" name="Mol. Cell">
        <title>Structure of a Complete ATP Synthase Dimer Reveals the Molecular Basis of Inner Mitochondrial Membrane Morphology.</title>
        <authorList>
            <person name="Hahn A."/>
            <person name="Parey K."/>
            <person name="Bublitz M."/>
            <person name="Mills D.J."/>
            <person name="Zickermann V."/>
            <person name="Vonck J."/>
            <person name="Kuehlbrandt W."/>
            <person name="Meier T."/>
        </authorList>
    </citation>
    <scope>X-RAY CRYSTALLOGRAPHY (3.5 ANGSTROMS) OF ATP SYNTHASE F1C10 COMPLEX</scope>
    <scope>STRUCTURE BY ELECTRON MICROSCOPY (7.7 ANGSTROMS) OF DIMERIC ATP SYNTHASE COMPLEX</scope>
    <scope>FUNCTION</scope>
    <scope>SUBUNIT</scope>
    <scope>SUBCELLULAR LOCATION</scope>
</reference>
<feature type="initiator methionine" description="Removed" evidence="2">
    <location>
        <position position="1"/>
    </location>
</feature>
<feature type="chain" id="PRO_0000445330" description="ATP synthase subunit epsilon, mitochondrial" evidence="5">
    <location>
        <begin position="2"/>
        <end position="10" status="greater than"/>
    </location>
</feature>
<feature type="non-terminal residue" evidence="5">
    <location>
        <position position="10"/>
    </location>
</feature>